<sequence length="47" mass="5630">MKRTFQPSLLKRHRTHGFRARIATKSGRQVLARRRAKKRSRLTISNR</sequence>
<name>RL34_BAUCH</name>
<evidence type="ECO:0000255" key="1">
    <source>
        <dbReference type="HAMAP-Rule" id="MF_00391"/>
    </source>
</evidence>
<evidence type="ECO:0000256" key="2">
    <source>
        <dbReference type="SAM" id="MobiDB-lite"/>
    </source>
</evidence>
<evidence type="ECO:0000305" key="3"/>
<accession>Q1LTW2</accession>
<organism>
    <name type="scientific">Baumannia cicadellinicola subsp. Homalodisca coagulata</name>
    <dbReference type="NCBI Taxonomy" id="374463"/>
    <lineage>
        <taxon>Bacteria</taxon>
        <taxon>Pseudomonadati</taxon>
        <taxon>Pseudomonadota</taxon>
        <taxon>Gammaproteobacteria</taxon>
        <taxon>Candidatus Palibaumannia</taxon>
    </lineage>
</organism>
<proteinExistence type="inferred from homology"/>
<reference key="1">
    <citation type="journal article" date="2006" name="PLoS Biol.">
        <title>Metabolic complementarity and genomics of the dual bacterial symbiosis of sharpshooters.</title>
        <authorList>
            <person name="Wu D."/>
            <person name="Daugherty S.C."/>
            <person name="Van Aken S.E."/>
            <person name="Pai G.H."/>
            <person name="Watkins K.L."/>
            <person name="Khouri H."/>
            <person name="Tallon L.J."/>
            <person name="Zaborsky J.M."/>
            <person name="Dunbar H.E."/>
            <person name="Tran P.L."/>
            <person name="Moran N.A."/>
            <person name="Eisen J.A."/>
        </authorList>
    </citation>
    <scope>NUCLEOTIDE SEQUENCE [LARGE SCALE GENOMIC DNA]</scope>
</reference>
<keyword id="KW-1185">Reference proteome</keyword>
<keyword id="KW-0687">Ribonucleoprotein</keyword>
<keyword id="KW-0689">Ribosomal protein</keyword>
<feature type="chain" id="PRO_1000013285" description="Large ribosomal subunit protein bL34">
    <location>
        <begin position="1"/>
        <end position="47"/>
    </location>
</feature>
<feature type="region of interest" description="Disordered" evidence="2">
    <location>
        <begin position="24"/>
        <end position="47"/>
    </location>
</feature>
<feature type="compositionally biased region" description="Basic residues" evidence="2">
    <location>
        <begin position="31"/>
        <end position="41"/>
    </location>
</feature>
<protein>
    <recommendedName>
        <fullName evidence="1">Large ribosomal subunit protein bL34</fullName>
    </recommendedName>
    <alternativeName>
        <fullName evidence="3">50S ribosomal protein L34</fullName>
    </alternativeName>
</protein>
<dbReference type="EMBL" id="CP000238">
    <property type="protein sequence ID" value="ABF14271.1"/>
    <property type="molecule type" value="Genomic_DNA"/>
</dbReference>
<dbReference type="RefSeq" id="WP_011520335.1">
    <property type="nucleotide sequence ID" value="NC_007984.1"/>
</dbReference>
<dbReference type="SMR" id="Q1LTW2"/>
<dbReference type="STRING" id="374463.BCI_0133"/>
<dbReference type="KEGG" id="bci:BCI_0133"/>
<dbReference type="HOGENOM" id="CLU_129938_2_0_6"/>
<dbReference type="OrthoDB" id="9804164at2"/>
<dbReference type="Proteomes" id="UP000002427">
    <property type="component" value="Chromosome"/>
</dbReference>
<dbReference type="GO" id="GO:1990904">
    <property type="term" value="C:ribonucleoprotein complex"/>
    <property type="evidence" value="ECO:0007669"/>
    <property type="project" value="UniProtKB-KW"/>
</dbReference>
<dbReference type="GO" id="GO:0005840">
    <property type="term" value="C:ribosome"/>
    <property type="evidence" value="ECO:0007669"/>
    <property type="project" value="UniProtKB-KW"/>
</dbReference>
<dbReference type="GO" id="GO:0003735">
    <property type="term" value="F:structural constituent of ribosome"/>
    <property type="evidence" value="ECO:0007669"/>
    <property type="project" value="InterPro"/>
</dbReference>
<dbReference type="GO" id="GO:0006412">
    <property type="term" value="P:translation"/>
    <property type="evidence" value="ECO:0007669"/>
    <property type="project" value="UniProtKB-UniRule"/>
</dbReference>
<dbReference type="FunFam" id="1.10.287.3980:FF:000001">
    <property type="entry name" value="Mitochondrial ribosomal protein L34"/>
    <property type="match status" value="1"/>
</dbReference>
<dbReference type="Gene3D" id="1.10.287.3980">
    <property type="match status" value="1"/>
</dbReference>
<dbReference type="HAMAP" id="MF_00391">
    <property type="entry name" value="Ribosomal_bL34"/>
    <property type="match status" value="1"/>
</dbReference>
<dbReference type="InterPro" id="IPR000271">
    <property type="entry name" value="Ribosomal_bL34"/>
</dbReference>
<dbReference type="InterPro" id="IPR020939">
    <property type="entry name" value="Ribosomal_bL34_CS"/>
</dbReference>
<dbReference type="NCBIfam" id="TIGR01030">
    <property type="entry name" value="rpmH_bact"/>
    <property type="match status" value="1"/>
</dbReference>
<dbReference type="PANTHER" id="PTHR14503:SF4">
    <property type="entry name" value="LARGE RIBOSOMAL SUBUNIT PROTEIN BL34M"/>
    <property type="match status" value="1"/>
</dbReference>
<dbReference type="PANTHER" id="PTHR14503">
    <property type="entry name" value="MITOCHONDRIAL RIBOSOMAL PROTEIN 34 FAMILY MEMBER"/>
    <property type="match status" value="1"/>
</dbReference>
<dbReference type="Pfam" id="PF00468">
    <property type="entry name" value="Ribosomal_L34"/>
    <property type="match status" value="1"/>
</dbReference>
<dbReference type="PROSITE" id="PS00784">
    <property type="entry name" value="RIBOSOMAL_L34"/>
    <property type="match status" value="1"/>
</dbReference>
<comment type="similarity">
    <text evidence="1">Belongs to the bacterial ribosomal protein bL34 family.</text>
</comment>
<gene>
    <name evidence="1" type="primary">rpmH</name>
    <name type="ordered locus">BCI_0133</name>
</gene>